<comment type="catalytic activity">
    <reaction evidence="2">
        <text>5-phospho-beta-D-ribosylamine + glycine + ATP = N(1)-(5-phospho-beta-D-ribosyl)glycinamide + ADP + phosphate + H(+)</text>
        <dbReference type="Rhea" id="RHEA:17453"/>
        <dbReference type="ChEBI" id="CHEBI:15378"/>
        <dbReference type="ChEBI" id="CHEBI:30616"/>
        <dbReference type="ChEBI" id="CHEBI:43474"/>
        <dbReference type="ChEBI" id="CHEBI:57305"/>
        <dbReference type="ChEBI" id="CHEBI:58681"/>
        <dbReference type="ChEBI" id="CHEBI:143788"/>
        <dbReference type="ChEBI" id="CHEBI:456216"/>
        <dbReference type="EC" id="6.3.4.13"/>
    </reaction>
</comment>
<comment type="cofactor">
    <cofactor evidence="1">
        <name>Mg(2+)</name>
        <dbReference type="ChEBI" id="CHEBI:18420"/>
    </cofactor>
    <cofactor evidence="1">
        <name>Mn(2+)</name>
        <dbReference type="ChEBI" id="CHEBI:29035"/>
    </cofactor>
    <text evidence="1">Binds 2 magnesium or manganese ions per subunit.</text>
</comment>
<comment type="pathway">
    <text evidence="2">Purine metabolism; IMP biosynthesis via de novo pathway; N(1)-(5-phospho-D-ribosyl)glycinamide from 5-phospho-alpha-D-ribose 1-diphosphate: step 2/2.</text>
</comment>
<comment type="similarity">
    <text evidence="2">Belongs to the GARS family.</text>
</comment>
<reference key="1">
    <citation type="submission" date="2007-06" db="EMBL/GenBank/DDBJ databases">
        <title>Complete sequence of Methanococcus vannielii SB.</title>
        <authorList>
            <consortium name="US DOE Joint Genome Institute"/>
            <person name="Copeland A."/>
            <person name="Lucas S."/>
            <person name="Lapidus A."/>
            <person name="Barry K."/>
            <person name="Glavina del Rio T."/>
            <person name="Dalin E."/>
            <person name="Tice H."/>
            <person name="Pitluck S."/>
            <person name="Chain P."/>
            <person name="Malfatti S."/>
            <person name="Shin M."/>
            <person name="Vergez L."/>
            <person name="Schmutz J."/>
            <person name="Larimer F."/>
            <person name="Land M."/>
            <person name="Hauser L."/>
            <person name="Kyrpides N."/>
            <person name="Anderson I."/>
            <person name="Sieprawska-Lupa M."/>
            <person name="Whitman W.B."/>
            <person name="Richardson P."/>
        </authorList>
    </citation>
    <scope>NUCLEOTIDE SEQUENCE [LARGE SCALE GENOMIC DNA]</scope>
    <source>
        <strain>ATCC 35089 / DSM 1224 / JCM 13029 / OCM 148 / SB</strain>
    </source>
</reference>
<dbReference type="EC" id="6.3.4.13" evidence="2"/>
<dbReference type="EMBL" id="CP000742">
    <property type="protein sequence ID" value="ABR55276.1"/>
    <property type="molecule type" value="Genomic_DNA"/>
</dbReference>
<dbReference type="RefSeq" id="WP_012066190.1">
    <property type="nucleotide sequence ID" value="NC_009634.1"/>
</dbReference>
<dbReference type="SMR" id="A6US04"/>
<dbReference type="STRING" id="406327.Mevan_1379"/>
<dbReference type="GeneID" id="5324746"/>
<dbReference type="KEGG" id="mvn:Mevan_1379"/>
<dbReference type="eggNOG" id="arCOG04415">
    <property type="taxonomic scope" value="Archaea"/>
</dbReference>
<dbReference type="HOGENOM" id="CLU_027420_3_0_2"/>
<dbReference type="OrthoDB" id="146558at2157"/>
<dbReference type="UniPathway" id="UPA00074">
    <property type="reaction ID" value="UER00125"/>
</dbReference>
<dbReference type="Proteomes" id="UP000001107">
    <property type="component" value="Chromosome"/>
</dbReference>
<dbReference type="GO" id="GO:0005524">
    <property type="term" value="F:ATP binding"/>
    <property type="evidence" value="ECO:0007669"/>
    <property type="project" value="UniProtKB-KW"/>
</dbReference>
<dbReference type="GO" id="GO:0046872">
    <property type="term" value="F:metal ion binding"/>
    <property type="evidence" value="ECO:0007669"/>
    <property type="project" value="UniProtKB-KW"/>
</dbReference>
<dbReference type="GO" id="GO:0004637">
    <property type="term" value="F:phosphoribosylamine-glycine ligase activity"/>
    <property type="evidence" value="ECO:0007669"/>
    <property type="project" value="UniProtKB-UniRule"/>
</dbReference>
<dbReference type="GO" id="GO:0006189">
    <property type="term" value="P:'de novo' IMP biosynthetic process"/>
    <property type="evidence" value="ECO:0007669"/>
    <property type="project" value="UniProtKB-UniRule"/>
</dbReference>
<dbReference type="GO" id="GO:0009113">
    <property type="term" value="P:purine nucleobase biosynthetic process"/>
    <property type="evidence" value="ECO:0007669"/>
    <property type="project" value="InterPro"/>
</dbReference>
<dbReference type="Gene3D" id="3.40.50.20">
    <property type="match status" value="1"/>
</dbReference>
<dbReference type="Gene3D" id="3.30.1490.20">
    <property type="entry name" value="ATP-grasp fold, A domain"/>
    <property type="match status" value="1"/>
</dbReference>
<dbReference type="Gene3D" id="3.30.470.20">
    <property type="entry name" value="ATP-grasp fold, B domain"/>
    <property type="match status" value="1"/>
</dbReference>
<dbReference type="Gene3D" id="3.90.600.10">
    <property type="entry name" value="Phosphoribosylglycinamide synthetase, C-terminal domain"/>
    <property type="match status" value="1"/>
</dbReference>
<dbReference type="HAMAP" id="MF_00138">
    <property type="entry name" value="GARS"/>
    <property type="match status" value="1"/>
</dbReference>
<dbReference type="InterPro" id="IPR011761">
    <property type="entry name" value="ATP-grasp"/>
</dbReference>
<dbReference type="InterPro" id="IPR013815">
    <property type="entry name" value="ATP_grasp_subdomain_1"/>
</dbReference>
<dbReference type="InterPro" id="IPR016185">
    <property type="entry name" value="PreATP-grasp_dom_sf"/>
</dbReference>
<dbReference type="InterPro" id="IPR020561">
    <property type="entry name" value="PRibGlycinamid_synth_ATP-grasp"/>
</dbReference>
<dbReference type="InterPro" id="IPR000115">
    <property type="entry name" value="PRibGlycinamide_synth"/>
</dbReference>
<dbReference type="InterPro" id="IPR020560">
    <property type="entry name" value="PRibGlycinamide_synth_C-dom"/>
</dbReference>
<dbReference type="InterPro" id="IPR037123">
    <property type="entry name" value="PRibGlycinamide_synth_C_sf"/>
</dbReference>
<dbReference type="InterPro" id="IPR020559">
    <property type="entry name" value="PRibGlycinamide_synth_CS"/>
</dbReference>
<dbReference type="InterPro" id="IPR020562">
    <property type="entry name" value="PRibGlycinamide_synth_N"/>
</dbReference>
<dbReference type="InterPro" id="IPR011054">
    <property type="entry name" value="Rudment_hybrid_motif"/>
</dbReference>
<dbReference type="NCBIfam" id="TIGR00877">
    <property type="entry name" value="purD"/>
    <property type="match status" value="1"/>
</dbReference>
<dbReference type="PANTHER" id="PTHR43472">
    <property type="entry name" value="PHOSPHORIBOSYLAMINE--GLYCINE LIGASE"/>
    <property type="match status" value="1"/>
</dbReference>
<dbReference type="PANTHER" id="PTHR43472:SF1">
    <property type="entry name" value="PHOSPHORIBOSYLAMINE--GLYCINE LIGASE, CHLOROPLASTIC"/>
    <property type="match status" value="1"/>
</dbReference>
<dbReference type="Pfam" id="PF01071">
    <property type="entry name" value="GARS_A"/>
    <property type="match status" value="1"/>
</dbReference>
<dbReference type="Pfam" id="PF02843">
    <property type="entry name" value="GARS_C"/>
    <property type="match status" value="1"/>
</dbReference>
<dbReference type="Pfam" id="PF02844">
    <property type="entry name" value="GARS_N"/>
    <property type="match status" value="1"/>
</dbReference>
<dbReference type="SMART" id="SM01209">
    <property type="entry name" value="GARS_A"/>
    <property type="match status" value="1"/>
</dbReference>
<dbReference type="SMART" id="SM01210">
    <property type="entry name" value="GARS_C"/>
    <property type="match status" value="1"/>
</dbReference>
<dbReference type="SUPFAM" id="SSF56059">
    <property type="entry name" value="Glutathione synthetase ATP-binding domain-like"/>
    <property type="match status" value="1"/>
</dbReference>
<dbReference type="SUPFAM" id="SSF52440">
    <property type="entry name" value="PreATP-grasp domain"/>
    <property type="match status" value="1"/>
</dbReference>
<dbReference type="SUPFAM" id="SSF51246">
    <property type="entry name" value="Rudiment single hybrid motif"/>
    <property type="match status" value="1"/>
</dbReference>
<dbReference type="PROSITE" id="PS50975">
    <property type="entry name" value="ATP_GRASP"/>
    <property type="match status" value="1"/>
</dbReference>
<dbReference type="PROSITE" id="PS00184">
    <property type="entry name" value="GARS"/>
    <property type="match status" value="1"/>
</dbReference>
<proteinExistence type="inferred from homology"/>
<protein>
    <recommendedName>
        <fullName evidence="2">Phosphoribosylamine--glycine ligase</fullName>
        <ecNumber evidence="2">6.3.4.13</ecNumber>
    </recommendedName>
    <alternativeName>
        <fullName evidence="2">GARS</fullName>
    </alternativeName>
    <alternativeName>
        <fullName evidence="2">Glycinamide ribonucleotide synthetase</fullName>
    </alternativeName>
    <alternativeName>
        <fullName evidence="2">Phosphoribosylglycinamide synthetase</fullName>
    </alternativeName>
</protein>
<gene>
    <name evidence="2" type="primary">purD</name>
    <name type="ordered locus">Mevan_1379</name>
</gene>
<organism>
    <name type="scientific">Methanococcus vannielii (strain ATCC 35089 / DSM 1224 / JCM 13029 / OCM 148 / SB)</name>
    <dbReference type="NCBI Taxonomy" id="406327"/>
    <lineage>
        <taxon>Archaea</taxon>
        <taxon>Methanobacteriati</taxon>
        <taxon>Methanobacteriota</taxon>
        <taxon>Methanomada group</taxon>
        <taxon>Methanococci</taxon>
        <taxon>Methanococcales</taxon>
        <taxon>Methanococcaceae</taxon>
        <taxon>Methanococcus</taxon>
    </lineage>
</organism>
<keyword id="KW-0067">ATP-binding</keyword>
<keyword id="KW-0436">Ligase</keyword>
<keyword id="KW-0460">Magnesium</keyword>
<keyword id="KW-0464">Manganese</keyword>
<keyword id="KW-0479">Metal-binding</keyword>
<keyword id="KW-0547">Nucleotide-binding</keyword>
<keyword id="KW-0658">Purine biosynthesis</keyword>
<name>PUR2_METVS</name>
<feature type="chain" id="PRO_1000018830" description="Phosphoribosylamine--glycine ligase">
    <location>
        <begin position="1"/>
        <end position="443"/>
    </location>
</feature>
<feature type="domain" description="ATP-grasp" evidence="2">
    <location>
        <begin position="109"/>
        <end position="324"/>
    </location>
</feature>
<feature type="binding site" evidence="2">
    <location>
        <begin position="140"/>
        <end position="202"/>
    </location>
    <ligand>
        <name>ATP</name>
        <dbReference type="ChEBI" id="CHEBI:30616"/>
    </ligand>
</feature>
<feature type="binding site" evidence="2">
    <location>
        <position position="282"/>
    </location>
    <ligand>
        <name>Mg(2+)</name>
        <dbReference type="ChEBI" id="CHEBI:18420"/>
        <label>1</label>
    </ligand>
</feature>
<feature type="binding site" evidence="2">
    <location>
        <position position="282"/>
    </location>
    <ligand>
        <name>Mn(2+)</name>
        <dbReference type="ChEBI" id="CHEBI:29035"/>
        <label>1</label>
    </ligand>
</feature>
<feature type="binding site" evidence="2">
    <location>
        <position position="294"/>
    </location>
    <ligand>
        <name>Mg(2+)</name>
        <dbReference type="ChEBI" id="CHEBI:18420"/>
        <label>1</label>
    </ligand>
</feature>
<feature type="binding site" evidence="2">
    <location>
        <position position="294"/>
    </location>
    <ligand>
        <name>Mg(2+)</name>
        <dbReference type="ChEBI" id="CHEBI:18420"/>
        <label>2</label>
    </ligand>
</feature>
<feature type="binding site" evidence="2">
    <location>
        <position position="294"/>
    </location>
    <ligand>
        <name>Mn(2+)</name>
        <dbReference type="ChEBI" id="CHEBI:29035"/>
        <label>1</label>
    </ligand>
</feature>
<feature type="binding site" evidence="2">
    <location>
        <position position="294"/>
    </location>
    <ligand>
        <name>Mn(2+)</name>
        <dbReference type="ChEBI" id="CHEBI:29035"/>
        <label>2</label>
    </ligand>
</feature>
<feature type="binding site" evidence="2">
    <location>
        <position position="296"/>
    </location>
    <ligand>
        <name>Mg(2+)</name>
        <dbReference type="ChEBI" id="CHEBI:18420"/>
        <label>2</label>
    </ligand>
</feature>
<feature type="binding site" evidence="2">
    <location>
        <position position="296"/>
    </location>
    <ligand>
        <name>Mn(2+)</name>
        <dbReference type="ChEBI" id="CHEBI:29035"/>
        <label>2</label>
    </ligand>
</feature>
<sequence length="443" mass="48771">MKVLLIGGGAREHAIAMALKKNRSVELYTLMKNKNPGIYGLSKEVSFNNETDIDKIKEFAEKIRPELAIIGPEAPLGVGAADLLTEMGIPTVGPKKLPAQIETSKEFMRNLFKKYNIKGSLKYAAFNEYGENLEKFIDEMTGLGKDVVVKPAGLTGGKGVKVVGEQLKNNDDAKLYAKEVFEKSIGGGKIIVEEKLVGVEFTLHGFVDGENIVFMPAVQDHPHAYNNDEGPITGGMGSYSCSNHKLPFLPDDKLDEAKEIMKETVNAIKAEVGPYNGFLYGQFMLTKDGPKIIEYNARFGDPEAMNLLPILKTDFLDVCFGISNGNLDNINIEFENKATVCKYVVPNGYPICPVKNKEILVNSNEIEKAGAILFYASVNEENGKLVITGSRSAAVTGISERIEDAEKIAQDAIINFEGEIFFRSDIGTKKLIEKRIERMKELI</sequence>
<accession>A6US04</accession>
<evidence type="ECO:0000250" key="1"/>
<evidence type="ECO:0000255" key="2">
    <source>
        <dbReference type="HAMAP-Rule" id="MF_00138"/>
    </source>
</evidence>